<reference key="1">
    <citation type="journal article" date="2008" name="Mol. Microbiol.">
        <title>The specialized secretory apparatus ESX-1 is essential for DNA transfer in Mycobacterium smegmatis.</title>
        <authorList>
            <person name="Coros A."/>
            <person name="Callahan B."/>
            <person name="Battaglioli E."/>
            <person name="Derbyshire K.M."/>
        </authorList>
    </citation>
    <scope>NUCLEOTIDE SEQUENCE [GENOMIC DNA]</scope>
    <scope>FUNCTION</scope>
    <scope>DISRUPTION PHENOTYPE</scope>
    <source>
        <strain>MKD8</strain>
    </source>
</reference>
<reference key="2">
    <citation type="journal article" date="2013" name="Genome Announc.">
        <title>Draft genome sequence of MKD8, a conjugal recipient Mycobacterium smegmatis strain.</title>
        <authorList>
            <person name="Gray T.A."/>
            <person name="Palumbo M.J."/>
            <person name="Derbyshire K.M."/>
        </authorList>
    </citation>
    <scope>NUCLEOTIDE SEQUENCE [LARGE SCALE GENOMIC DNA]</scope>
    <source>
        <strain>MKD8</strain>
    </source>
</reference>
<reference key="3">
    <citation type="submission" date="2018-03" db="EMBL/GenBank/DDBJ databases">
        <authorList>
            <person name="Derbyshire K."/>
            <person name="Gray T.A."/>
            <person name="Champion M."/>
        </authorList>
    </citation>
    <scope>NUCLEOTIDE SEQUENCE [LARGE SCALE GENOMIC DNA]</scope>
    <source>
        <strain>MKD8</strain>
    </source>
</reference>
<name>Y5234_MYCSE</name>
<organism>
    <name type="scientific">Mycolicibacterium smegmatis (strain MKD8)</name>
    <name type="common">Mycobacterium smegmatis</name>
    <dbReference type="NCBI Taxonomy" id="1214915"/>
    <lineage>
        <taxon>Bacteria</taxon>
        <taxon>Bacillati</taxon>
        <taxon>Actinomycetota</taxon>
        <taxon>Actinomycetes</taxon>
        <taxon>Mycobacteriales</taxon>
        <taxon>Mycobacteriaceae</taxon>
        <taxon>Mycolicibacterium</taxon>
    </lineage>
</organism>
<sequence>MIIDSKGRRIIPPSARRFMIVTAIAVAIFVVITGVVIFVTRPPTSDSAATFHRGDWQAPPEALLSSPMRVRPVPGWRVRMTDLGLPESAVFADTELTHEAEPFVGAMEKRAYFMAMSTTDPRRWLVGLDLSTGRPLFSPVSIDPGPDFVKCFVNGPDQVLCAADGKPEGKTATIAWVVDTRTGEVVFNGPTDLHVTPGSGSHLKQVGSYVVAEIQGKGLSGVGPRAETTWLIPDAKKVTPTNRNADTAAPRLAVAEDLAGGPDHAVVFSVVDGTVITPDLGADRTPERAVVYPQGFAILAAGKRGSGLRDTVLFFDNAGNRVGESGIQGSLSDLSMVLPMVQSAPSYTVFGANGAGLIQLPGEGLDAVLIGHRLYAPESEWDGPVKVRRWRQFDLRTGEEGTACLPNMQWYIANDGQVGVFETSQHETTGATFFGMDLTTCEKLWTVPVNWESFHRLWRIDDTLVELSDDGKELHSLVAPA</sequence>
<keyword id="KW-0997">Cell inner membrane</keyword>
<keyword id="KW-1003">Cell membrane</keyword>
<keyword id="KW-0472">Membrane</keyword>
<keyword id="KW-0812">Transmembrane</keyword>
<keyword id="KW-1133">Transmembrane helix</keyword>
<proteinExistence type="inferred from homology"/>
<feature type="chain" id="PRO_0000438357" description="Uncharacterized protein D806_5234">
    <location>
        <begin position="1"/>
        <end position="481"/>
    </location>
</feature>
<feature type="transmembrane region" description="Helical" evidence="1">
    <location>
        <begin position="18"/>
        <end position="38"/>
    </location>
</feature>
<accession>L8F618</accession>
<accession>A0A2U9PW47</accession>
<accession>B3GNJ4</accession>
<evidence type="ECO:0000255" key="1"/>
<evidence type="ECO:0000269" key="2">
    <source>
    </source>
</evidence>
<evidence type="ECO:0000303" key="3">
    <source>
    </source>
</evidence>
<evidence type="ECO:0000305" key="4"/>
<evidence type="ECO:0000305" key="5">
    <source>
    </source>
</evidence>
<evidence type="ECO:0000312" key="6">
    <source>
        <dbReference type="EMBL" id="AWT56012.1"/>
    </source>
</evidence>
<comment type="function">
    <text evidence="2">Involved in DNA conjugation in the recipient strain (PubMed:18554329).</text>
</comment>
<comment type="subcellular location">
    <subcellularLocation>
        <location evidence="1">Cell inner membrane</location>
        <topology evidence="1">Single-pass membrane protein</topology>
    </subcellularLocation>
</comment>
<comment type="disruption phenotype">
    <text evidence="2">Loss of DNA conjugation when disrupted in recipient strain, strain still secretes EsxB (PubMed:18554329).</text>
</comment>
<comment type="miscellaneous">
    <text evidence="4">In the well characterized mc(2)155 strain this gene not present; it is part of an MKD8 strain-specific insert (RSR-II) between MSMEG_5168 and MSMEG_5169.</text>
</comment>
<comment type="miscellaneous">
    <text evidence="5">DNA conjugation in M.smegmatis is unidirectional with distinct donor and recipient strains; mc(2)155 is a donor strain while MKD8 is a recipient strain. Mutations in a donor strain that alter DNA transfer do not always alter DNA transfer in a recipient strain.</text>
</comment>
<gene>
    <name evidence="3" type="ORF">5168d</name>
    <name evidence="6" type="ORF">D806_050620</name>
    <name type="ORF">D806_5234</name>
</gene>
<protein>
    <recommendedName>
        <fullName>Uncharacterized protein D806_5234</fullName>
    </recommendedName>
</protein>
<dbReference type="EMBL" id="EU711430">
    <property type="protein sequence ID" value="ACE06968.1"/>
    <property type="molecule type" value="Genomic_DNA"/>
</dbReference>
<dbReference type="EMBL" id="CP027541">
    <property type="protein sequence ID" value="AWT56012.1"/>
    <property type="molecule type" value="Genomic_DNA"/>
</dbReference>
<dbReference type="RefSeq" id="WP_003896570.1">
    <property type="nucleotide sequence ID" value="NZ_CP027541.1"/>
</dbReference>
<dbReference type="PATRIC" id="fig|1214915.3.peg.5259"/>
<dbReference type="HOGENOM" id="CLU_049593_0_0_11"/>
<dbReference type="Proteomes" id="UP000011200">
    <property type="component" value="Chromosome"/>
</dbReference>
<dbReference type="GO" id="GO:0005886">
    <property type="term" value="C:plasma membrane"/>
    <property type="evidence" value="ECO:0007669"/>
    <property type="project" value="UniProtKB-SubCell"/>
</dbReference>